<evidence type="ECO:0000255" key="1">
    <source>
        <dbReference type="HAMAP-Rule" id="MF_01367"/>
    </source>
</evidence>
<evidence type="ECO:0000305" key="2"/>
<accession>A6QCQ8</accession>
<protein>
    <recommendedName>
        <fullName evidence="1">Large ribosomal subunit protein uL14</fullName>
    </recommendedName>
    <alternativeName>
        <fullName evidence="2">50S ribosomal protein L14</fullName>
    </alternativeName>
</protein>
<sequence length="122" mass="13361">MIQGFTRLNVADNSGAKEIMCIKVLGGSKRRYASVGDVIVASVKKALPTGKVKKGKVVKAVVVRTKKEIQRENGSLIRFDDNAAVIIDDKKEPIGTRIFGPVSRETRYAGFMKIVSLAPEVW</sequence>
<dbReference type="EMBL" id="AP009179">
    <property type="protein sequence ID" value="BAF73267.1"/>
    <property type="molecule type" value="Genomic_DNA"/>
</dbReference>
<dbReference type="RefSeq" id="WP_012084107.1">
    <property type="nucleotide sequence ID" value="NC_009663.1"/>
</dbReference>
<dbReference type="SMR" id="A6QCQ8"/>
<dbReference type="STRING" id="387093.SUN_2331"/>
<dbReference type="KEGG" id="sun:SUN_2331"/>
<dbReference type="eggNOG" id="COG0093">
    <property type="taxonomic scope" value="Bacteria"/>
</dbReference>
<dbReference type="HOGENOM" id="CLU_095071_2_1_7"/>
<dbReference type="OrthoDB" id="9806379at2"/>
<dbReference type="Proteomes" id="UP000006378">
    <property type="component" value="Chromosome"/>
</dbReference>
<dbReference type="GO" id="GO:0022625">
    <property type="term" value="C:cytosolic large ribosomal subunit"/>
    <property type="evidence" value="ECO:0007669"/>
    <property type="project" value="TreeGrafter"/>
</dbReference>
<dbReference type="GO" id="GO:0070180">
    <property type="term" value="F:large ribosomal subunit rRNA binding"/>
    <property type="evidence" value="ECO:0007669"/>
    <property type="project" value="TreeGrafter"/>
</dbReference>
<dbReference type="GO" id="GO:0003735">
    <property type="term" value="F:structural constituent of ribosome"/>
    <property type="evidence" value="ECO:0007669"/>
    <property type="project" value="InterPro"/>
</dbReference>
<dbReference type="GO" id="GO:0006412">
    <property type="term" value="P:translation"/>
    <property type="evidence" value="ECO:0007669"/>
    <property type="project" value="UniProtKB-UniRule"/>
</dbReference>
<dbReference type="CDD" id="cd00337">
    <property type="entry name" value="Ribosomal_uL14"/>
    <property type="match status" value="1"/>
</dbReference>
<dbReference type="FunFam" id="2.40.150.20:FF:000001">
    <property type="entry name" value="50S ribosomal protein L14"/>
    <property type="match status" value="1"/>
</dbReference>
<dbReference type="Gene3D" id="2.40.150.20">
    <property type="entry name" value="Ribosomal protein L14"/>
    <property type="match status" value="1"/>
</dbReference>
<dbReference type="HAMAP" id="MF_01367">
    <property type="entry name" value="Ribosomal_uL14"/>
    <property type="match status" value="1"/>
</dbReference>
<dbReference type="InterPro" id="IPR000218">
    <property type="entry name" value="Ribosomal_uL14"/>
</dbReference>
<dbReference type="InterPro" id="IPR005745">
    <property type="entry name" value="Ribosomal_uL14_bac-type"/>
</dbReference>
<dbReference type="InterPro" id="IPR019972">
    <property type="entry name" value="Ribosomal_uL14_CS"/>
</dbReference>
<dbReference type="InterPro" id="IPR036853">
    <property type="entry name" value="Ribosomal_uL14_sf"/>
</dbReference>
<dbReference type="NCBIfam" id="TIGR01067">
    <property type="entry name" value="rplN_bact"/>
    <property type="match status" value="1"/>
</dbReference>
<dbReference type="PANTHER" id="PTHR11761">
    <property type="entry name" value="50S/60S RIBOSOMAL PROTEIN L14/L23"/>
    <property type="match status" value="1"/>
</dbReference>
<dbReference type="PANTHER" id="PTHR11761:SF3">
    <property type="entry name" value="LARGE RIBOSOMAL SUBUNIT PROTEIN UL14M"/>
    <property type="match status" value="1"/>
</dbReference>
<dbReference type="Pfam" id="PF00238">
    <property type="entry name" value="Ribosomal_L14"/>
    <property type="match status" value="1"/>
</dbReference>
<dbReference type="SMART" id="SM01374">
    <property type="entry name" value="Ribosomal_L14"/>
    <property type="match status" value="1"/>
</dbReference>
<dbReference type="SUPFAM" id="SSF50193">
    <property type="entry name" value="Ribosomal protein L14"/>
    <property type="match status" value="1"/>
</dbReference>
<dbReference type="PROSITE" id="PS00049">
    <property type="entry name" value="RIBOSOMAL_L14"/>
    <property type="match status" value="1"/>
</dbReference>
<reference key="1">
    <citation type="journal article" date="2007" name="Proc. Natl. Acad. Sci. U.S.A.">
        <title>Deep-sea vent epsilon-proteobacterial genomes provide insights into emergence of pathogens.</title>
        <authorList>
            <person name="Nakagawa S."/>
            <person name="Takaki Y."/>
            <person name="Shimamura S."/>
            <person name="Reysenbach A.-L."/>
            <person name="Takai K."/>
            <person name="Horikoshi K."/>
        </authorList>
    </citation>
    <scope>NUCLEOTIDE SEQUENCE [LARGE SCALE GENOMIC DNA]</scope>
    <source>
        <strain>NBC37-1</strain>
    </source>
</reference>
<proteinExistence type="inferred from homology"/>
<comment type="function">
    <text evidence="1">Binds to 23S rRNA. Forms part of two intersubunit bridges in the 70S ribosome.</text>
</comment>
<comment type="subunit">
    <text evidence="1">Part of the 50S ribosomal subunit. Forms a cluster with proteins L3 and L19. In the 70S ribosome, L14 and L19 interact and together make contacts with the 16S rRNA in bridges B5 and B8.</text>
</comment>
<comment type="similarity">
    <text evidence="1">Belongs to the universal ribosomal protein uL14 family.</text>
</comment>
<organism>
    <name type="scientific">Sulfurovum sp. (strain NBC37-1)</name>
    <dbReference type="NCBI Taxonomy" id="387093"/>
    <lineage>
        <taxon>Bacteria</taxon>
        <taxon>Pseudomonadati</taxon>
        <taxon>Campylobacterota</taxon>
        <taxon>Epsilonproteobacteria</taxon>
        <taxon>Campylobacterales</taxon>
        <taxon>Sulfurovaceae</taxon>
        <taxon>Sulfurovum</taxon>
    </lineage>
</organism>
<name>RL14_SULNB</name>
<keyword id="KW-0687">Ribonucleoprotein</keyword>
<keyword id="KW-0689">Ribosomal protein</keyword>
<keyword id="KW-0694">RNA-binding</keyword>
<keyword id="KW-0699">rRNA-binding</keyword>
<feature type="chain" id="PRO_1000055731" description="Large ribosomal subunit protein uL14">
    <location>
        <begin position="1"/>
        <end position="122"/>
    </location>
</feature>
<gene>
    <name evidence="1" type="primary">rplN</name>
    <name type="ordered locus">SUN_2331</name>
</gene>